<sequence>MAISIKTPEDIEKMRVAGRLAAEVLEMIEPYVKPGVSTGELDRICNDYIVNEQHAVSACLGYHGYPKSVCISINEVVCHGIPDDAKLLKDGDIVNIDVTVIKDGFHGDTSKMFIVGKPTIMGERLCRITQESLYLALRMVKPGINLREIGAAIQKFVEAEGFSVVREYCGHGIGRGFHEEPQVLHYDSRETNVVLKPGMTFTIEPMVNAGKKEIRTMKDGWTVKTKDRSLSAQYEHTIVVTDNGCEILTLRKDDTIPAIISHDE</sequence>
<comment type="function">
    <text evidence="1 14 16">Removes the N-terminal methionine from nascent proteins. The N-terminal methionine is often cleaved when the second residue in the primary sequence is small and uncharged (Met-Ala-, Cys, Gly, Pro, Ser, Thr, or Val). Requires deformylation of the N(alpha)-formylated initiator methionine before it can be hydrolyzed.</text>
</comment>
<comment type="catalytic activity">
    <reaction evidence="1 8 14 16">
        <text>Release of N-terminal amino acids, preferentially methionine, from peptides and arylamides.</text>
        <dbReference type="EC" id="3.4.11.18"/>
    </reaction>
</comment>
<comment type="cofactor">
    <cofactor evidence="1 2 3 4 5 8 13">
        <name>Co(2+)</name>
        <dbReference type="ChEBI" id="CHEBI:48828"/>
    </cofactor>
    <cofactor evidence="1 3">
        <name>Zn(2+)</name>
        <dbReference type="ChEBI" id="CHEBI:29105"/>
    </cofactor>
    <cofactor evidence="1 3 7 9">
        <name>Mn(2+)</name>
        <dbReference type="ChEBI" id="CHEBI:29035"/>
    </cofactor>
    <cofactor evidence="1 3 5 10 15">
        <name>Fe(2+)</name>
        <dbReference type="ChEBI" id="CHEBI:29033"/>
    </cofactor>
    <text evidence="1 3 7 10 15">Binds 2 divalent metal cations per subunit. Has a high-affinity and a low affinity metal-binding site. The true nature of the physiological cofactor is under debate. The enzyme is active with cobalt, zinc, manganese or divalent iron ions. Most likely, methionine aminopeptidases function as mononuclear Fe(2+)-metalloproteases under physiological conditions, and the catalytically relevant metal-binding site has been assigned to the histidine-containing high-affinity site.</text>
</comment>
<comment type="cofactor">
    <cofactor evidence="2">
        <name>Na(+)</name>
        <dbReference type="ChEBI" id="CHEBI:29101"/>
    </cofactor>
    <text evidence="2">Binds 1 sodium ion per subunit. The sodium ion has a structural role.</text>
</comment>
<comment type="biophysicochemical properties">
    <kinetics>
        <KM evidence="3 6 11 12">2 mM for a Met-Gly-Met-Met peptide (for the Fe(2+)-complexed enzyme)</KM>
        <KM evidence="3 6 11 12">1.3 mM for a Met-Gly-Met-Met peptide (for the Mn(2+)-complexed enzyme)</KM>
        <KM evidence="3 6 11 12">3.2 mM for a Met-Gly-Met-Met peptide (for the Co(2+)-complexed enzyme)</KM>
        <Vmax evidence="3 6 11 12">55.0 umol/min/mg enzyme (for the Fe(2+)-complexed enzyme)</Vmax>
        <Vmax evidence="3 6 11 12">77.0 umol/min/mg enzyme (for the Co(2+)-complexed enzyme)</Vmax>
    </kinetics>
</comment>
<comment type="subunit">
    <text evidence="1 2 7">Monomer.</text>
</comment>
<comment type="similarity">
    <text evidence="1">Belongs to the peptidase M24A family. Methionine aminopeptidase type 1 subfamily.</text>
</comment>
<name>MAP1_ECOLI</name>
<evidence type="ECO:0000255" key="1">
    <source>
        <dbReference type="HAMAP-Rule" id="MF_01974"/>
    </source>
</evidence>
<evidence type="ECO:0000269" key="2">
    <source>
    </source>
</evidence>
<evidence type="ECO:0000269" key="3">
    <source>
    </source>
</evidence>
<evidence type="ECO:0000269" key="4">
    <source>
    </source>
</evidence>
<evidence type="ECO:0000269" key="5">
    <source>
    </source>
</evidence>
<evidence type="ECO:0000269" key="6">
    <source>
    </source>
</evidence>
<evidence type="ECO:0000269" key="7">
    <source>
    </source>
</evidence>
<evidence type="ECO:0000269" key="8">
    <source>
    </source>
</evidence>
<evidence type="ECO:0000269" key="9">
    <source>
    </source>
</evidence>
<evidence type="ECO:0000269" key="10">
    <source>
    </source>
</evidence>
<evidence type="ECO:0000269" key="11">
    <source>
    </source>
</evidence>
<evidence type="ECO:0000269" key="12">
    <source>
    </source>
</evidence>
<evidence type="ECO:0000269" key="13">
    <source>
    </source>
</evidence>
<evidence type="ECO:0000269" key="14">
    <source>
    </source>
</evidence>
<evidence type="ECO:0000269" key="15">
    <source>
    </source>
</evidence>
<evidence type="ECO:0000269" key="16">
    <source>
    </source>
</evidence>
<evidence type="ECO:0007829" key="17">
    <source>
        <dbReference type="PDB" id="2EVM"/>
    </source>
</evidence>
<evidence type="ECO:0007829" key="18">
    <source>
        <dbReference type="PDB" id="2GG2"/>
    </source>
</evidence>
<evidence type="ECO:0007829" key="19">
    <source>
        <dbReference type="PDB" id="2GG9"/>
    </source>
</evidence>
<evidence type="ECO:0007829" key="20">
    <source>
        <dbReference type="PDB" id="2GGB"/>
    </source>
</evidence>
<accession>P0AE18</accession>
<accession>P07906</accession>
<gene>
    <name evidence="1" type="primary">map</name>
    <name type="ordered locus">b0168</name>
    <name type="ordered locus">JW0163</name>
</gene>
<keyword id="KW-0002">3D-structure</keyword>
<keyword id="KW-0031">Aminopeptidase</keyword>
<keyword id="KW-0903">Direct protein sequencing</keyword>
<keyword id="KW-0378">Hydrolase</keyword>
<keyword id="KW-0479">Metal-binding</keyword>
<keyword id="KW-0645">Protease</keyword>
<keyword id="KW-1185">Reference proteome</keyword>
<protein>
    <recommendedName>
        <fullName evidence="1">Methionine aminopeptidase</fullName>
        <shortName evidence="1">MAP</shortName>
        <shortName evidence="1">MetAP</shortName>
        <ecNumber evidence="1">3.4.11.18</ecNumber>
    </recommendedName>
    <alternativeName>
        <fullName evidence="1">Peptidase M</fullName>
    </alternativeName>
</protein>
<proteinExistence type="evidence at protein level"/>
<feature type="initiator methionine" description="Removed" evidence="16">
    <location>
        <position position="1"/>
    </location>
</feature>
<feature type="chain" id="PRO_0000148937" description="Methionine aminopeptidase">
    <location>
        <begin position="2"/>
        <end position="264"/>
    </location>
</feature>
<feature type="binding site" evidence="1 4 7 8">
    <location>
        <position position="79"/>
    </location>
    <ligand>
        <name>substrate</name>
    </ligand>
</feature>
<feature type="binding site" evidence="1 2 4 7 8 9 10">
    <location>
        <position position="97"/>
    </location>
    <ligand>
        <name>a divalent metal cation</name>
        <dbReference type="ChEBI" id="CHEBI:60240"/>
        <label>1</label>
    </ligand>
</feature>
<feature type="binding site" evidence="4 7 8">
    <location>
        <position position="99"/>
    </location>
    <ligand>
        <name>substrate</name>
    </ligand>
</feature>
<feature type="binding site" evidence="1 2 4 7 8 9 10">
    <location>
        <position position="108"/>
    </location>
    <ligand>
        <name>a divalent metal cation</name>
        <dbReference type="ChEBI" id="CHEBI:60240"/>
        <label>1</label>
    </ligand>
</feature>
<feature type="binding site" evidence="1 2 4 7 8 9 10">
    <location>
        <position position="108"/>
    </location>
    <ligand>
        <name>a divalent metal cation</name>
        <dbReference type="ChEBI" id="CHEBI:60240"/>
        <label>2</label>
        <note>catalytic</note>
    </ligand>
</feature>
<feature type="binding site" evidence="1 2 4 7 8 9 10">
    <location>
        <position position="171"/>
    </location>
    <ligand>
        <name>a divalent metal cation</name>
        <dbReference type="ChEBI" id="CHEBI:60240"/>
        <label>2</label>
        <note>catalytic</note>
    </ligand>
</feature>
<feature type="binding site" evidence="1 4 7 8">
    <location>
        <position position="178"/>
    </location>
    <ligand>
        <name>substrate</name>
    </ligand>
</feature>
<feature type="binding site" evidence="1 2 4 7 8 9 10">
    <location>
        <position position="204"/>
    </location>
    <ligand>
        <name>a divalent metal cation</name>
        <dbReference type="ChEBI" id="CHEBI:60240"/>
        <label>2</label>
        <note>catalytic</note>
    </ligand>
</feature>
<feature type="binding site" evidence="1 2 4 7 8 9 10">
    <location>
        <position position="235"/>
    </location>
    <ligand>
        <name>a divalent metal cation</name>
        <dbReference type="ChEBI" id="CHEBI:60240"/>
        <label>1</label>
    </ligand>
</feature>
<feature type="binding site" evidence="1 2 4 7 8 9 10">
    <location>
        <position position="235"/>
    </location>
    <ligand>
        <name>a divalent metal cation</name>
        <dbReference type="ChEBI" id="CHEBI:60240"/>
        <label>2</label>
        <note>catalytic</note>
    </ligand>
</feature>
<feature type="mutagenesis site" description="Reduces activity 100000-fold for the Co(2+)-complexed enzyme, but only 2.6-fold for the Mn(2+)-complexed enzyme." evidence="2 11">
    <original>H</original>
    <variation>A</variation>
    <location>
        <position position="79"/>
    </location>
</feature>
<feature type="mutagenesis site" description="Reduces activity 50- to 580-fold depending on the metal ion bound. Binds only one equivalent of the divalent metal cation with affinities identical to the wild-type enzyme." evidence="12">
    <original>D</original>
    <variation>A</variation>
    <variation>E</variation>
    <variation>N</variation>
    <location>
        <position position="97"/>
    </location>
</feature>
<feature type="mutagenesis site" description="Reduces activity 9000-fold for the Co(2+)-complexed enzyme. Binds only one equivalent of the divalent metal cation with affinities identical to the wild-type enzyme." evidence="2 6">
    <original>H</original>
    <variation>A</variation>
    <location>
        <position position="178"/>
    </location>
</feature>
<feature type="helix" evidence="18">
    <location>
        <begin position="8"/>
        <end position="28"/>
    </location>
</feature>
<feature type="helix" evidence="18">
    <location>
        <begin position="29"/>
        <end position="31"/>
    </location>
</feature>
<feature type="helix" evidence="18">
    <location>
        <begin position="38"/>
        <end position="51"/>
    </location>
</feature>
<feature type="strand" evidence="18">
    <location>
        <begin position="56"/>
        <end position="59"/>
    </location>
</feature>
<feature type="helix" evidence="18">
    <location>
        <begin position="62"/>
        <end position="64"/>
    </location>
</feature>
<feature type="strand" evidence="18">
    <location>
        <begin position="67"/>
        <end position="73"/>
    </location>
</feature>
<feature type="strand" evidence="18">
    <location>
        <begin position="76"/>
        <end position="78"/>
    </location>
</feature>
<feature type="strand" evidence="18">
    <location>
        <begin position="93"/>
        <end position="102"/>
    </location>
</feature>
<feature type="strand" evidence="18">
    <location>
        <begin position="105"/>
        <end position="114"/>
    </location>
</feature>
<feature type="strand" evidence="20">
    <location>
        <begin position="116"/>
        <end position="118"/>
    </location>
</feature>
<feature type="helix" evidence="18">
    <location>
        <begin position="120"/>
        <end position="139"/>
    </location>
</feature>
<feature type="helix" evidence="18">
    <location>
        <begin position="146"/>
        <end position="159"/>
    </location>
</feature>
<feature type="strand" evidence="19">
    <location>
        <begin position="166"/>
        <end position="168"/>
    </location>
</feature>
<feature type="strand" evidence="18">
    <location>
        <begin position="170"/>
        <end position="172"/>
    </location>
</feature>
<feature type="strand" evidence="18">
    <location>
        <begin position="174"/>
        <end position="183"/>
    </location>
</feature>
<feature type="strand" evidence="18">
    <location>
        <begin position="200"/>
        <end position="203"/>
    </location>
</feature>
<feature type="strand" evidence="18">
    <location>
        <begin position="206"/>
        <end position="210"/>
    </location>
</feature>
<feature type="strand" evidence="18">
    <location>
        <begin position="214"/>
        <end position="216"/>
    </location>
</feature>
<feature type="strand" evidence="17">
    <location>
        <begin position="218"/>
        <end position="221"/>
    </location>
</feature>
<feature type="strand" evidence="18">
    <location>
        <begin position="223"/>
        <end position="225"/>
    </location>
</feature>
<feature type="strand" evidence="18">
    <location>
        <begin position="231"/>
        <end position="233"/>
    </location>
</feature>
<feature type="strand" evidence="18">
    <location>
        <begin position="235"/>
        <end position="241"/>
    </location>
</feature>
<feature type="strand" evidence="18">
    <location>
        <begin position="244"/>
        <end position="249"/>
    </location>
</feature>
<feature type="strand" evidence="18">
    <location>
        <begin position="258"/>
        <end position="261"/>
    </location>
</feature>
<dbReference type="EC" id="3.4.11.18" evidence="1"/>
<dbReference type="EMBL" id="M15106">
    <property type="protein sequence ID" value="AAA24112.1"/>
    <property type="molecule type" value="Genomic_DNA"/>
</dbReference>
<dbReference type="EMBL" id="U70214">
    <property type="protein sequence ID" value="AAB08597.1"/>
    <property type="molecule type" value="Genomic_DNA"/>
</dbReference>
<dbReference type="EMBL" id="U00096">
    <property type="protein sequence ID" value="AAC73279.1"/>
    <property type="molecule type" value="Genomic_DNA"/>
</dbReference>
<dbReference type="EMBL" id="AP009048">
    <property type="protein sequence ID" value="BAB96743.1"/>
    <property type="molecule type" value="Genomic_DNA"/>
</dbReference>
<dbReference type="PIR" id="A27761">
    <property type="entry name" value="DPECM"/>
</dbReference>
<dbReference type="RefSeq" id="NP_414710.1">
    <property type="nucleotide sequence ID" value="NC_000913.3"/>
</dbReference>
<dbReference type="RefSeq" id="WP_001018194.1">
    <property type="nucleotide sequence ID" value="NZ_STEB01000032.1"/>
</dbReference>
<dbReference type="PDB" id="1C21">
    <property type="method" value="X-ray"/>
    <property type="resolution" value="1.80 A"/>
    <property type="chains" value="A=2-264"/>
</dbReference>
<dbReference type="PDB" id="1C22">
    <property type="method" value="X-ray"/>
    <property type="resolution" value="1.75 A"/>
    <property type="chains" value="A=2-264"/>
</dbReference>
<dbReference type="PDB" id="1C23">
    <property type="method" value="X-ray"/>
    <property type="resolution" value="2.00 A"/>
    <property type="chains" value="A=2-264"/>
</dbReference>
<dbReference type="PDB" id="1C24">
    <property type="method" value="X-ray"/>
    <property type="resolution" value="1.70 A"/>
    <property type="chains" value="A=2-264"/>
</dbReference>
<dbReference type="PDB" id="1C27">
    <property type="method" value="X-ray"/>
    <property type="resolution" value="1.95 A"/>
    <property type="chains" value="A=2-264"/>
</dbReference>
<dbReference type="PDB" id="1MAT">
    <property type="method" value="X-ray"/>
    <property type="resolution" value="2.40 A"/>
    <property type="chains" value="A=1-264"/>
</dbReference>
<dbReference type="PDB" id="1XNZ">
    <property type="method" value="X-ray"/>
    <property type="resolution" value="1.52 A"/>
    <property type="chains" value="A=1-264"/>
</dbReference>
<dbReference type="PDB" id="1YVM">
    <property type="method" value="X-ray"/>
    <property type="resolution" value="1.60 A"/>
    <property type="chains" value="A=1-264"/>
</dbReference>
<dbReference type="PDB" id="2BB7">
    <property type="method" value="X-ray"/>
    <property type="resolution" value="1.70 A"/>
    <property type="chains" value="A=1-264"/>
</dbReference>
<dbReference type="PDB" id="2EVC">
    <property type="method" value="X-ray"/>
    <property type="resolution" value="1.60 A"/>
    <property type="chains" value="A=1-264"/>
</dbReference>
<dbReference type="PDB" id="2EVM">
    <property type="method" value="X-ray"/>
    <property type="resolution" value="1.70 A"/>
    <property type="chains" value="A=1-264"/>
</dbReference>
<dbReference type="PDB" id="2EVO">
    <property type="method" value="X-ray"/>
    <property type="resolution" value="1.70 A"/>
    <property type="chains" value="A/B=1-264"/>
</dbReference>
<dbReference type="PDB" id="2GG0">
    <property type="method" value="X-ray"/>
    <property type="resolution" value="1.28 A"/>
    <property type="chains" value="A=2-264"/>
</dbReference>
<dbReference type="PDB" id="2GG2">
    <property type="method" value="X-ray"/>
    <property type="resolution" value="1.00 A"/>
    <property type="chains" value="A=2-264"/>
</dbReference>
<dbReference type="PDB" id="2GG3">
    <property type="method" value="X-ray"/>
    <property type="resolution" value="1.45 A"/>
    <property type="chains" value="A=2-264"/>
</dbReference>
<dbReference type="PDB" id="2GG5">
    <property type="method" value="X-ray"/>
    <property type="resolution" value="2.12 A"/>
    <property type="chains" value="A=2-264"/>
</dbReference>
<dbReference type="PDB" id="2GG7">
    <property type="method" value="X-ray"/>
    <property type="resolution" value="1.12 A"/>
    <property type="chains" value="A=2-264"/>
</dbReference>
<dbReference type="PDB" id="2GG8">
    <property type="method" value="X-ray"/>
    <property type="resolution" value="1.80 A"/>
    <property type="chains" value="A=2-264"/>
</dbReference>
<dbReference type="PDB" id="2GG9">
    <property type="method" value="X-ray"/>
    <property type="resolution" value="1.05 A"/>
    <property type="chains" value="A=2-264"/>
</dbReference>
<dbReference type="PDB" id="2GGB">
    <property type="method" value="X-ray"/>
    <property type="resolution" value="2.13 A"/>
    <property type="chains" value="A=2-264"/>
</dbReference>
<dbReference type="PDB" id="2GGC">
    <property type="method" value="X-ray"/>
    <property type="resolution" value="1.00 A"/>
    <property type="chains" value="A=2-264"/>
</dbReference>
<dbReference type="PDB" id="2GTX">
    <property type="method" value="X-ray"/>
    <property type="resolution" value="2.00 A"/>
    <property type="chains" value="A/B=4-264"/>
</dbReference>
<dbReference type="PDB" id="2GU4">
    <property type="method" value="X-ray"/>
    <property type="resolution" value="1.80 A"/>
    <property type="chains" value="A/B=2-264"/>
</dbReference>
<dbReference type="PDB" id="2GU5">
    <property type="method" value="X-ray"/>
    <property type="resolution" value="1.60 A"/>
    <property type="chains" value="A/B=2-264"/>
</dbReference>
<dbReference type="PDB" id="2GU6">
    <property type="method" value="X-ray"/>
    <property type="resolution" value="1.70 A"/>
    <property type="chains" value="A/B=2-264"/>
</dbReference>
<dbReference type="PDB" id="2GU7">
    <property type="method" value="X-ray"/>
    <property type="resolution" value="2.00 A"/>
    <property type="chains" value="A/B=2-264"/>
</dbReference>
<dbReference type="PDB" id="2MAT">
    <property type="method" value="X-ray"/>
    <property type="resolution" value="1.90 A"/>
    <property type="chains" value="A=1-264"/>
</dbReference>
<dbReference type="PDB" id="2P98">
    <property type="method" value="X-ray"/>
    <property type="resolution" value="1.70 A"/>
    <property type="chains" value="A=2-262"/>
</dbReference>
<dbReference type="PDB" id="2P99">
    <property type="method" value="X-ray"/>
    <property type="resolution" value="1.80 A"/>
    <property type="chains" value="A=2-262"/>
</dbReference>
<dbReference type="PDB" id="2P9A">
    <property type="method" value="X-ray"/>
    <property type="resolution" value="1.60 A"/>
    <property type="chains" value="A=2-263"/>
</dbReference>
<dbReference type="PDB" id="2Q92">
    <property type="method" value="X-ray"/>
    <property type="resolution" value="1.90 A"/>
    <property type="chains" value="A=2-263"/>
</dbReference>
<dbReference type="PDB" id="2Q93">
    <property type="method" value="X-ray"/>
    <property type="resolution" value="1.60 A"/>
    <property type="chains" value="A=2-264"/>
</dbReference>
<dbReference type="PDB" id="2Q94">
    <property type="method" value="X-ray"/>
    <property type="resolution" value="1.63 A"/>
    <property type="chains" value="A=2-263"/>
</dbReference>
<dbReference type="PDB" id="2Q95">
    <property type="method" value="X-ray"/>
    <property type="resolution" value="1.70 A"/>
    <property type="chains" value="A=2-264"/>
</dbReference>
<dbReference type="PDB" id="2Q96">
    <property type="method" value="X-ray"/>
    <property type="resolution" value="1.60 A"/>
    <property type="chains" value="A=2-264"/>
</dbReference>
<dbReference type="PDB" id="3D27">
    <property type="method" value="X-ray"/>
    <property type="resolution" value="2.20 A"/>
    <property type="chains" value="A=4-264"/>
</dbReference>
<dbReference type="PDB" id="3MAT">
    <property type="method" value="X-ray"/>
    <property type="resolution" value="2.00 A"/>
    <property type="chains" value="A=1-264"/>
</dbReference>
<dbReference type="PDB" id="4MAT">
    <property type="method" value="X-ray"/>
    <property type="resolution" value="2.00 A"/>
    <property type="chains" value="A=1-264"/>
</dbReference>
<dbReference type="PDB" id="4Z7M">
    <property type="method" value="X-ray"/>
    <property type="resolution" value="1.43 A"/>
    <property type="chains" value="A/B=2-262"/>
</dbReference>
<dbReference type="PDB" id="6IZ7">
    <property type="method" value="EM"/>
    <property type="resolution" value="11.80 A"/>
    <property type="chains" value="P=1-264"/>
</dbReference>
<dbReference type="PDB" id="6IZI">
    <property type="method" value="EM"/>
    <property type="resolution" value="11.80 A"/>
    <property type="chains" value="Q=1-264"/>
</dbReference>
<dbReference type="PDB" id="6J0A">
    <property type="method" value="EM"/>
    <property type="resolution" value="14.20 A"/>
    <property type="chains" value="P=1-264"/>
</dbReference>
<dbReference type="PDBsum" id="1C21"/>
<dbReference type="PDBsum" id="1C22"/>
<dbReference type="PDBsum" id="1C23"/>
<dbReference type="PDBsum" id="1C24"/>
<dbReference type="PDBsum" id="1C27"/>
<dbReference type="PDBsum" id="1MAT"/>
<dbReference type="PDBsum" id="1XNZ"/>
<dbReference type="PDBsum" id="1YVM"/>
<dbReference type="PDBsum" id="2BB7"/>
<dbReference type="PDBsum" id="2EVC"/>
<dbReference type="PDBsum" id="2EVM"/>
<dbReference type="PDBsum" id="2EVO"/>
<dbReference type="PDBsum" id="2GG0"/>
<dbReference type="PDBsum" id="2GG2"/>
<dbReference type="PDBsum" id="2GG3"/>
<dbReference type="PDBsum" id="2GG5"/>
<dbReference type="PDBsum" id="2GG7"/>
<dbReference type="PDBsum" id="2GG8"/>
<dbReference type="PDBsum" id="2GG9"/>
<dbReference type="PDBsum" id="2GGB"/>
<dbReference type="PDBsum" id="2GGC"/>
<dbReference type="PDBsum" id="2GTX"/>
<dbReference type="PDBsum" id="2GU4"/>
<dbReference type="PDBsum" id="2GU5"/>
<dbReference type="PDBsum" id="2GU6"/>
<dbReference type="PDBsum" id="2GU7"/>
<dbReference type="PDBsum" id="2MAT"/>
<dbReference type="PDBsum" id="2P98"/>
<dbReference type="PDBsum" id="2P99"/>
<dbReference type="PDBsum" id="2P9A"/>
<dbReference type="PDBsum" id="2Q92"/>
<dbReference type="PDBsum" id="2Q93"/>
<dbReference type="PDBsum" id="2Q94"/>
<dbReference type="PDBsum" id="2Q95"/>
<dbReference type="PDBsum" id="2Q96"/>
<dbReference type="PDBsum" id="3D27"/>
<dbReference type="PDBsum" id="3MAT"/>
<dbReference type="PDBsum" id="4MAT"/>
<dbReference type="PDBsum" id="4Z7M"/>
<dbReference type="PDBsum" id="6IZ7"/>
<dbReference type="PDBsum" id="6IZI"/>
<dbReference type="PDBsum" id="6J0A"/>
<dbReference type="EMDB" id="EMD-9752"/>
<dbReference type="EMDB" id="EMD-9753"/>
<dbReference type="EMDB" id="EMD-9759"/>
<dbReference type="SMR" id="P0AE18"/>
<dbReference type="BioGRID" id="4262194">
    <property type="interactions" value="79"/>
</dbReference>
<dbReference type="DIP" id="DIP-48040N"/>
<dbReference type="FunCoup" id="P0AE18">
    <property type="interactions" value="776"/>
</dbReference>
<dbReference type="IntAct" id="P0AE18">
    <property type="interactions" value="25"/>
</dbReference>
<dbReference type="STRING" id="511145.b0168"/>
<dbReference type="BindingDB" id="P0AE18"/>
<dbReference type="ChEMBL" id="CHEMBL3423"/>
<dbReference type="DrugBank" id="DB08668">
    <property type="generic name" value="3-(5-Amino-3-imino-3H-pyrazol-4-ylazo)-benzoic acid"/>
</dbReference>
<dbReference type="DrugBank" id="DB08718">
    <property type="generic name" value="4-(3-ethylthiophen-2-yl)benzene-1,2-diol"/>
</dbReference>
<dbReference type="DrugBank" id="DB08667">
    <property type="generic name" value="4-(4-fluoro-phenylazo)-5-imino-5H-pyrazol-3-ylamine"/>
</dbReference>
<dbReference type="DrugBank" id="DB07758">
    <property type="generic name" value="5-(2,5-DICHLOROPHENYL)-2-FUROIC ACID"/>
</dbReference>
<dbReference type="DrugBank" id="DB07305">
    <property type="generic name" value="5-(2-CHLORO-4-NITROPHENYL)-2-FUROIC ACID"/>
</dbReference>
<dbReference type="DrugBank" id="DB07308">
    <property type="generic name" value="5-(2-CHLOROBENZYL)-2-FUROIC ACID"/>
</dbReference>
<dbReference type="DrugBank" id="DB08757">
    <property type="generic name" value="5-(2-chlorophenyl)furan-2-carbohydrazide"/>
</dbReference>
<dbReference type="DrugBank" id="DB02909">
    <property type="generic name" value="5-(2-Chlorophenyl)Furan-2-Carboxylic Acid"/>
</dbReference>
<dbReference type="DrugBank" id="DB07407">
    <property type="generic name" value="5-(2-METHOXYPHENYL)-2-FUROIC ACID"/>
</dbReference>
<dbReference type="DrugBank" id="DB07408">
    <property type="generic name" value="5-(2-NITROPHENYL)-2-FUROIC ACID"/>
</dbReference>
<dbReference type="DrugBank" id="DB07304">
    <property type="generic name" value="5-[2-(TRIFLUOROMETHOXY)PHENYL]-2-FUROIC ACID"/>
</dbReference>
<dbReference type="DrugBank" id="DB07759">
    <property type="generic name" value="5-[2-(TRIFLUOROMETHYL)PHENYL]-2-FUROIC ACID"/>
</dbReference>
<dbReference type="DrugBank" id="DB08671">
    <property type="generic name" value="5-Imino-4-(2-trifluoromethyl-phenylazo)-5H-pyrazol-3-ylamine"/>
</dbReference>
<dbReference type="DrugBank" id="DB08666">
    <property type="generic name" value="5-imino-4-(3-trifluoromethyl-phenylazo)-5H-pyrazol-3-ylamine"/>
</dbReference>
<dbReference type="DrugBank" id="DB08758">
    <property type="generic name" value="IMIDAZO[2,1-A]ISOQUINOLINE-2-CARBOHYDRAZIDE"/>
</dbReference>
<dbReference type="DrugBank" id="DB04015">
    <property type="generic name" value="Methionine Phosphinate"/>
</dbReference>
<dbReference type="DrugBank" id="DB02151">
    <property type="generic name" value="Methionine Phosphonate"/>
</dbReference>
<dbReference type="DrugBank" id="DB08670">
    <property type="generic name" value="METHYL N-[(2S,3R)-3-AMINO-2-HYDROXY-3-(4-ISOPROPYLPHENYL)PROPANOYL]-D-ALANYL-D-LEUCINATE"/>
</dbReference>
<dbReference type="DrugBank" id="DB08669">
    <property type="generic name" value="METHYL N-[(2S,3R)-3-AMINO-2-HYDROXY-3-(4-METHYLPHENYL)PROPANOYL]-D-ALANYL-D-LEUCINATE"/>
</dbReference>
<dbReference type="DrugBank" id="DB08451">
    <property type="generic name" value="N-(QUINOLIN-8-YL)METHANESULFONAMIDE"/>
</dbReference>
<dbReference type="DrugBank" id="DB07591">
    <property type="generic name" value="N1-CYCLOPENTYL-N2-(THIAZOL-2-YL)OXALAMIDE"/>
</dbReference>
<dbReference type="DrugBank" id="DB02088">
    <property type="generic name" value="Norleucine Phosphonate"/>
</dbReference>
<dbReference type="DrugBank" id="DB03799">
    <property type="generic name" value="Trifluoromethionine"/>
</dbReference>
<dbReference type="DrugCentral" id="P0AE18"/>
<dbReference type="MEROPS" id="M24.001"/>
<dbReference type="jPOST" id="P0AE18"/>
<dbReference type="PaxDb" id="511145-b0168"/>
<dbReference type="EnsemblBacteria" id="AAC73279">
    <property type="protein sequence ID" value="AAC73279"/>
    <property type="gene ID" value="b0168"/>
</dbReference>
<dbReference type="GeneID" id="93777257"/>
<dbReference type="GeneID" id="947882"/>
<dbReference type="KEGG" id="ecj:JW0163"/>
<dbReference type="KEGG" id="eco:b0168"/>
<dbReference type="KEGG" id="ecoc:C3026_00765"/>
<dbReference type="PATRIC" id="fig|1411691.4.peg.2113"/>
<dbReference type="EchoBASE" id="EB0565"/>
<dbReference type="eggNOG" id="COG0024">
    <property type="taxonomic scope" value="Bacteria"/>
</dbReference>
<dbReference type="HOGENOM" id="CLU_015857_0_0_6"/>
<dbReference type="InParanoid" id="P0AE18"/>
<dbReference type="OMA" id="FYGDHAY"/>
<dbReference type="OrthoDB" id="9802055at2"/>
<dbReference type="PhylomeDB" id="P0AE18"/>
<dbReference type="BioCyc" id="EcoCyc:EG10570-MONOMER"/>
<dbReference type="BioCyc" id="MetaCyc:EG10570-MONOMER"/>
<dbReference type="BRENDA" id="3.4.11.18">
    <property type="organism ID" value="2026"/>
</dbReference>
<dbReference type="SABIO-RK" id="P0AE18"/>
<dbReference type="EvolutionaryTrace" id="P0AE18"/>
<dbReference type="PRO" id="PR:P0AE18"/>
<dbReference type="Proteomes" id="UP000000625">
    <property type="component" value="Chromosome"/>
</dbReference>
<dbReference type="GO" id="GO:0005829">
    <property type="term" value="C:cytosol"/>
    <property type="evidence" value="ECO:0000314"/>
    <property type="project" value="EcoCyc"/>
</dbReference>
<dbReference type="GO" id="GO:0008198">
    <property type="term" value="F:ferrous iron binding"/>
    <property type="evidence" value="ECO:0000314"/>
    <property type="project" value="EcoCyc"/>
</dbReference>
<dbReference type="GO" id="GO:0004239">
    <property type="term" value="F:initiator methionyl aminopeptidase activity"/>
    <property type="evidence" value="ECO:0000314"/>
    <property type="project" value="EcoCyc"/>
</dbReference>
<dbReference type="GO" id="GO:0070006">
    <property type="term" value="F:metalloaminopeptidase activity"/>
    <property type="evidence" value="ECO:0000314"/>
    <property type="project" value="EcoCyc"/>
</dbReference>
<dbReference type="GO" id="GO:0006508">
    <property type="term" value="P:proteolysis"/>
    <property type="evidence" value="ECO:0007669"/>
    <property type="project" value="UniProtKB-KW"/>
</dbReference>
<dbReference type="CDD" id="cd01086">
    <property type="entry name" value="MetAP1"/>
    <property type="match status" value="1"/>
</dbReference>
<dbReference type="FunFam" id="3.90.230.10:FF:000001">
    <property type="entry name" value="Methionine aminopeptidase"/>
    <property type="match status" value="1"/>
</dbReference>
<dbReference type="Gene3D" id="3.90.230.10">
    <property type="entry name" value="Creatinase/methionine aminopeptidase superfamily"/>
    <property type="match status" value="1"/>
</dbReference>
<dbReference type="HAMAP" id="MF_01974">
    <property type="entry name" value="MetAP_1"/>
    <property type="match status" value="1"/>
</dbReference>
<dbReference type="InterPro" id="IPR036005">
    <property type="entry name" value="Creatinase/aminopeptidase-like"/>
</dbReference>
<dbReference type="InterPro" id="IPR000994">
    <property type="entry name" value="Pept_M24"/>
</dbReference>
<dbReference type="InterPro" id="IPR001714">
    <property type="entry name" value="Pept_M24_MAP"/>
</dbReference>
<dbReference type="InterPro" id="IPR002467">
    <property type="entry name" value="Pept_M24A_MAP1"/>
</dbReference>
<dbReference type="NCBIfam" id="TIGR00500">
    <property type="entry name" value="met_pdase_I"/>
    <property type="match status" value="1"/>
</dbReference>
<dbReference type="PANTHER" id="PTHR43330">
    <property type="entry name" value="METHIONINE AMINOPEPTIDASE"/>
    <property type="match status" value="1"/>
</dbReference>
<dbReference type="PANTHER" id="PTHR43330:SF27">
    <property type="entry name" value="METHIONINE AMINOPEPTIDASE"/>
    <property type="match status" value="1"/>
</dbReference>
<dbReference type="Pfam" id="PF00557">
    <property type="entry name" value="Peptidase_M24"/>
    <property type="match status" value="1"/>
</dbReference>
<dbReference type="PRINTS" id="PR00599">
    <property type="entry name" value="MAPEPTIDASE"/>
</dbReference>
<dbReference type="SUPFAM" id="SSF55920">
    <property type="entry name" value="Creatinase/aminopeptidase"/>
    <property type="match status" value="1"/>
</dbReference>
<dbReference type="PROSITE" id="PS00680">
    <property type="entry name" value="MAP_1"/>
    <property type="match status" value="1"/>
</dbReference>
<reference key="1">
    <citation type="journal article" date="1987" name="J. Bacteriol.">
        <title>Processing of the initiation methionine from proteins: properties of the Escherichia coli methionine aminopeptidase and its gene structure.</title>
        <authorList>
            <person name="Ben-Bassat A."/>
            <person name="Bauer K."/>
            <person name="Chang S.-Y."/>
            <person name="Myambo K."/>
            <person name="Boosman A."/>
            <person name="Chang S."/>
        </authorList>
    </citation>
    <scope>NUCLEOTIDE SEQUENCE [GENOMIC DNA]</scope>
    <scope>PROTEIN SEQUENCE OF 2-64</scope>
    <scope>FUNCTION</scope>
    <scope>CATALYTIC ACTIVITY</scope>
    <source>
        <strain>K12</strain>
    </source>
</reference>
<reference key="2">
    <citation type="journal article" date="1994" name="Nucleic Acids Res.">
        <title>Systematic sequencing of the Escherichia coli genome: analysis of the 2.4-4.1 min (110,917-193,643 bp) region.</title>
        <authorList>
            <person name="Fujita N."/>
            <person name="Mori H."/>
            <person name="Yura T."/>
            <person name="Ishihama A."/>
        </authorList>
    </citation>
    <scope>NUCLEOTIDE SEQUENCE [LARGE SCALE GENOMIC DNA]</scope>
    <source>
        <strain>K12 / W3110 / ATCC 27325 / DSM 5911</strain>
    </source>
</reference>
<reference key="3">
    <citation type="submission" date="1997-01" db="EMBL/GenBank/DDBJ databases">
        <title>Sequence of minutes 4-25 of Escherichia coli.</title>
        <authorList>
            <person name="Chung E."/>
            <person name="Allen E."/>
            <person name="Araujo R."/>
            <person name="Aparicio A.M."/>
            <person name="Davis K."/>
            <person name="Duncan M."/>
            <person name="Federspiel N."/>
            <person name="Hyman R."/>
            <person name="Kalman S."/>
            <person name="Komp C."/>
            <person name="Kurdi O."/>
            <person name="Lew H."/>
            <person name="Lin D."/>
            <person name="Namath A."/>
            <person name="Oefner P."/>
            <person name="Roberts D."/>
            <person name="Schramm S."/>
            <person name="Davis R.W."/>
        </authorList>
    </citation>
    <scope>NUCLEOTIDE SEQUENCE [LARGE SCALE GENOMIC DNA]</scope>
    <source>
        <strain>K12 / MG1655 / ATCC 47076</strain>
    </source>
</reference>
<reference key="4">
    <citation type="journal article" date="1997" name="Science">
        <title>The complete genome sequence of Escherichia coli K-12.</title>
        <authorList>
            <person name="Blattner F.R."/>
            <person name="Plunkett G. III"/>
            <person name="Bloch C.A."/>
            <person name="Perna N.T."/>
            <person name="Burland V."/>
            <person name="Riley M."/>
            <person name="Collado-Vides J."/>
            <person name="Glasner J.D."/>
            <person name="Rode C.K."/>
            <person name="Mayhew G.F."/>
            <person name="Gregor J."/>
            <person name="Davis N.W."/>
            <person name="Kirkpatrick H.A."/>
            <person name="Goeden M.A."/>
            <person name="Rose D.J."/>
            <person name="Mau B."/>
            <person name="Shao Y."/>
        </authorList>
    </citation>
    <scope>NUCLEOTIDE SEQUENCE [LARGE SCALE GENOMIC DNA]</scope>
    <source>
        <strain>K12 / MG1655 / ATCC 47076</strain>
    </source>
</reference>
<reference key="5">
    <citation type="journal article" date="2006" name="Mol. Syst. Biol.">
        <title>Highly accurate genome sequences of Escherichia coli K-12 strains MG1655 and W3110.</title>
        <authorList>
            <person name="Hayashi K."/>
            <person name="Morooka N."/>
            <person name="Yamamoto Y."/>
            <person name="Fujita K."/>
            <person name="Isono K."/>
            <person name="Choi S."/>
            <person name="Ohtsubo E."/>
            <person name="Baba T."/>
            <person name="Wanner B.L."/>
            <person name="Mori H."/>
            <person name="Horiuchi T."/>
        </authorList>
    </citation>
    <scope>NUCLEOTIDE SEQUENCE [LARGE SCALE GENOMIC DNA]</scope>
    <source>
        <strain>K12 / W3110 / ATCC 27325 / DSM 5911</strain>
    </source>
</reference>
<reference key="6">
    <citation type="journal article" date="1997" name="Electrophoresis">
        <title>Escherichia coli proteome analysis using the gene-protein database.</title>
        <authorList>
            <person name="VanBogelen R.A."/>
            <person name="Abshire K.Z."/>
            <person name="Moldover B."/>
            <person name="Olson E.R."/>
            <person name="Neidhardt F.C."/>
        </authorList>
    </citation>
    <scope>IDENTIFICATION BY 2D-GEL</scope>
</reference>
<reference key="7">
    <citation type="journal article" date="1999" name="Biochemistry">
        <title>The methionyl aminopeptidase from Escherichia coli can function as an iron(II) enzyme.</title>
        <authorList>
            <person name="D'souza V.M."/>
            <person name="Holz R.C."/>
        </authorList>
    </citation>
    <scope>COFACTOR</scope>
    <scope>BIOPHYSICOCHEMICAL PROPERTIES</scope>
</reference>
<reference key="8">
    <citation type="journal article" date="2000" name="Biochemistry">
        <title>Divalent metal binding properties of the methionyl aminopeptidase from Escherichia coli.</title>
        <authorList>
            <person name="D'souza V.M."/>
            <person name="Bennett B."/>
            <person name="Copik A.J."/>
            <person name="Holz R.C."/>
        </authorList>
    </citation>
    <scope>COFACTOR</scope>
</reference>
<reference key="9">
    <citation type="journal article" date="2003" name="Biochemistry">
        <title>Kinetic and spectroscopic characterization of the H178A methionyl aminopeptidase from Escherichia coli.</title>
        <authorList>
            <person name="Copik A.J."/>
            <person name="Swierczek S.I."/>
            <person name="Lowther W.T."/>
            <person name="D'souza V.M."/>
            <person name="Matthews B.W."/>
            <person name="Holz R.C."/>
        </authorList>
    </citation>
    <scope>MUTAGENESIS OF HIS-178</scope>
    <scope>BIOPHYSICOCHEMICAL PROPERTIES</scope>
</reference>
<reference key="10">
    <citation type="journal article" date="2008" name="Biochemistry">
        <title>Kinetic and spectroscopic analysis of the catalytic role of H79 in the methionine aminopeptidase from Escherichia coli.</title>
        <authorList>
            <person name="Watterson S.J."/>
            <person name="Mitra S."/>
            <person name="Swierczek S.I."/>
            <person name="Bennett B."/>
            <person name="Holz R.C."/>
        </authorList>
    </citation>
    <scope>MUTAGENESIS OF HIS-79</scope>
    <scope>BIOPHYSICOCHEMICAL PROPERTIES</scope>
</reference>
<reference key="11">
    <citation type="journal article" date="2008" name="FEBS J.">
        <title>Analyzing the catalytic role of Asp97 in the methionine aminopeptidase from Escherichia coli.</title>
        <authorList>
            <person name="Mitra S."/>
            <person name="Job K.M."/>
            <person name="Meng L."/>
            <person name="Bennett B."/>
            <person name="Holz R.C."/>
        </authorList>
    </citation>
    <scope>MUTAGENESIS OF ASP-97</scope>
    <scope>BIOPHYSICOCHEMICAL PROPERTIES</scope>
</reference>
<reference key="12">
    <citation type="journal article" date="2009" name="BMC Biochem.">
        <title>Analysis of the stoichiometric metal activation of methionine aminopeptidase.</title>
        <authorList>
            <person name="Chai S.C."/>
            <person name="Ye Q.Z."/>
        </authorList>
    </citation>
    <scope>COFACTOR</scope>
</reference>
<reference key="13">
    <citation type="journal article" date="2010" name="Biochemistry">
        <title>Protein N-terminal processing: substrate specificity of Escherichia coli and human methionine aminopeptidases.</title>
        <authorList>
            <person name="Xiao Q."/>
            <person name="Zhang F."/>
            <person name="Nacev B.A."/>
            <person name="Liu J.O."/>
            <person name="Pei D."/>
        </authorList>
    </citation>
    <scope>FUNCTION</scope>
    <scope>CATALYTIC ACTIVITY</scope>
</reference>
<reference key="14">
    <citation type="journal article" date="2012" name="J. Inorg. Biochem.">
        <title>Probing the metal ion selectivity in methionine aminopeptidase via changes in the luminescence properties of the enzyme bound europium ion.</title>
        <authorList>
            <person name="Sule N."/>
            <person name="Singh R.K."/>
            <person name="Zhao P."/>
            <person name="Srivastava D.K."/>
        </authorList>
    </citation>
    <scope>COFACTOR</scope>
</reference>
<reference key="15">
    <citation type="journal article" date="1993" name="Biochemistry">
        <title>Structure of the cobalt-dependent methionine aminopeptidase from Escherichia coli: a new type of proteolytic enzyme.</title>
        <authorList>
            <person name="Roderick S.L."/>
            <person name="Mathews B.W."/>
        </authorList>
    </citation>
    <scope>X-RAY CRYSTALLOGRAPHY (2.4 ANGSTROMS)</scope>
</reference>
<reference key="16">
    <citation type="journal article" date="1999" name="Biochemistry">
        <title>Escherichia coli methionine aminopeptidase: implications of crystallographic analyses of the native, mutant, and inhibited enzymes for the mechanism of catalysis.</title>
        <authorList>
            <person name="Lowther W.T."/>
            <person name="Orville A.M."/>
            <person name="Madden D.T."/>
            <person name="Lim S."/>
            <person name="Rich D.H."/>
            <person name="Matthews B.W."/>
        </authorList>
    </citation>
    <scope>X-RAY CRYSTALLOGRAPHY (1.9 ANGSTROMS) IN COMPLEX WITH SODIUM; COBALT IONS AND INHIBITOR</scope>
    <scope>COFACTOR</scope>
    <scope>MUTAGENESIS OF HIS-79 AND HIS-178</scope>
</reference>
<reference key="17">
    <citation type="journal article" date="1999" name="Biochemistry">
        <title>Insights into the mechanism of Escherichia coli methionine aminopeptidase from the structural analysis of reaction products and phosphorus-based transition-state analogues.</title>
        <authorList>
            <person name="Lowther W.T."/>
            <person name="Zhang Y."/>
            <person name="Sampson P.B."/>
            <person name="Honek J.F."/>
            <person name="Matthews B.W."/>
        </authorList>
    </citation>
    <scope>X-RAY CRYSTALLOGRAPHY (1.7 ANGSTROMS) IN COMPLEXES WITH COBALT IONS; PRODUCT AND TRANSITION STATE ANALOGS</scope>
</reference>
<reference key="18">
    <citation type="journal article" date="2006" name="Proc. Natl. Acad. Sci. U.S.A.">
        <title>Structural basis of catalysis by monometalated methionine aminopeptidase.</title>
        <authorList>
            <person name="Ye Q.Z."/>
            <person name="Xie S.X."/>
            <person name="Ma Z.Q."/>
            <person name="Huang M."/>
            <person name="Hanzlik R.P."/>
        </authorList>
    </citation>
    <scope>X-RAY CRYSTALLOGRAPHY (1.60 ANGSTROMS) OF 4-264 IN COMPLEX WITH MANGANESE AND A TRANSITION STATE ANALOG</scope>
    <scope>COFACTOR</scope>
</reference>
<reference key="19">
    <citation type="journal article" date="2007" name="BMC Struct. Biol.">
        <title>Structural analysis of inhibition of E. coli methionine aminopeptidase: implication of loop adaptability in selective inhibition of bacterial enzymes.</title>
        <authorList>
            <person name="Ma Z.-Q."/>
            <person name="Xie S.-X."/>
            <person name="Huang Q.-Q."/>
            <person name="Nan F.-J."/>
            <person name="Hurley T.D."/>
            <person name="Ye Q.-Z."/>
        </authorList>
    </citation>
    <scope>X-RAY CRYSTALLOGRAPHY (1.6 ANGSTROMS) OF 2-264 IN COMPLEXES WITH MANGANESE IONS AND INHIBITORS</scope>
</reference>
<reference key="20">
    <citation type="journal article" date="2007" name="Proteins">
        <title>Serendipitous discovery of novel bacterial methionine aminopeptidase inhibitors.</title>
        <authorList>
            <person name="Evdokimov A.G."/>
            <person name="Pokross M."/>
            <person name="Walter R.L."/>
            <person name="Mekel M."/>
            <person name="Barnett B.L."/>
            <person name="Amburgey J."/>
            <person name="Seibel W.L."/>
            <person name="Soper S.J."/>
            <person name="Djung J.F."/>
            <person name="Fairweather N."/>
            <person name="Diven C."/>
            <person name="Rastogi V."/>
            <person name="Grinius L."/>
            <person name="Klanke C."/>
            <person name="Siehnel R."/>
            <person name="Twinem T."/>
            <person name="Andrews R."/>
            <person name="Curnow A."/>
        </authorList>
    </citation>
    <scope>X-RAY CRYSTALLOGRAPHY (1.0 ANGSTROMS) OF 2-264 IN COMPLEXES WITH COBALT IONS; METHIONINE OR INHIBITORS OF THE PYRAZOLE DIAMINE TYPE</scope>
    <scope>CATALYTIC ACTIVITY</scope>
</reference>
<reference key="21">
    <citation type="journal article" date="2008" name="J. Med. Chem.">
        <title>Discovery of inhibitors of Escherichia coli methionine aminopeptidase with the Fe(II)-form selectivity and antibacterial activity.</title>
        <authorList>
            <person name="Wang W.-L."/>
            <person name="Chai S.C."/>
            <person name="Huang M."/>
            <person name="He H.-Z."/>
            <person name="Hurley T.D."/>
            <person name="Ye Q.-Z."/>
        </authorList>
    </citation>
    <scope>X-RAY CRYSTALLOGRAPHY (2.2 ANGSTROMS) OF 4-264 IN COMPLEXES WITH CATECHOL-CONTAINING INHIBITORS AND IRON IONS</scope>
    <scope>COFACTOR</scope>
</reference>
<organism>
    <name type="scientific">Escherichia coli (strain K12)</name>
    <dbReference type="NCBI Taxonomy" id="83333"/>
    <lineage>
        <taxon>Bacteria</taxon>
        <taxon>Pseudomonadati</taxon>
        <taxon>Pseudomonadota</taxon>
        <taxon>Gammaproteobacteria</taxon>
        <taxon>Enterobacterales</taxon>
        <taxon>Enterobacteriaceae</taxon>
        <taxon>Escherichia</taxon>
    </lineage>
</organism>